<comment type="function">
    <text evidence="1">IGPS catalyzes the conversion of PRFAR and glutamine to IGP, AICAR and glutamate. The HisF subunit catalyzes the cyclization activity that produces IGP and AICAR from PRFAR using the ammonia provided by the HisH subunit.</text>
</comment>
<comment type="catalytic activity">
    <reaction evidence="1">
        <text>5-[(5-phospho-1-deoxy-D-ribulos-1-ylimino)methylamino]-1-(5-phospho-beta-D-ribosyl)imidazole-4-carboxamide + L-glutamine = D-erythro-1-(imidazol-4-yl)glycerol 3-phosphate + 5-amino-1-(5-phospho-beta-D-ribosyl)imidazole-4-carboxamide + L-glutamate + H(+)</text>
        <dbReference type="Rhea" id="RHEA:24793"/>
        <dbReference type="ChEBI" id="CHEBI:15378"/>
        <dbReference type="ChEBI" id="CHEBI:29985"/>
        <dbReference type="ChEBI" id="CHEBI:58278"/>
        <dbReference type="ChEBI" id="CHEBI:58359"/>
        <dbReference type="ChEBI" id="CHEBI:58475"/>
        <dbReference type="ChEBI" id="CHEBI:58525"/>
        <dbReference type="EC" id="4.3.2.10"/>
    </reaction>
</comment>
<comment type="pathway">
    <text evidence="1">Amino-acid biosynthesis; L-histidine biosynthesis; L-histidine from 5-phospho-alpha-D-ribose 1-diphosphate: step 5/9.</text>
</comment>
<comment type="subunit">
    <text evidence="1">Heterodimer of HisH and HisF.</text>
</comment>
<comment type="subcellular location">
    <subcellularLocation>
        <location evidence="1">Cytoplasm</location>
    </subcellularLocation>
</comment>
<comment type="similarity">
    <text evidence="1">Belongs to the HisA/HisF family.</text>
</comment>
<evidence type="ECO:0000255" key="1">
    <source>
        <dbReference type="HAMAP-Rule" id="MF_01013"/>
    </source>
</evidence>
<name>HIS6_MYCPA</name>
<reference key="1">
    <citation type="journal article" date="2005" name="Proc. Natl. Acad. Sci. U.S.A.">
        <title>The complete genome sequence of Mycobacterium avium subspecies paratuberculosis.</title>
        <authorList>
            <person name="Li L."/>
            <person name="Bannantine J.P."/>
            <person name="Zhang Q."/>
            <person name="Amonsin A."/>
            <person name="May B.J."/>
            <person name="Alt D."/>
            <person name="Banerji N."/>
            <person name="Kanjilal S."/>
            <person name="Kapur V."/>
        </authorList>
    </citation>
    <scope>NUCLEOTIDE SEQUENCE [LARGE SCALE GENOMIC DNA]</scope>
    <source>
        <strain>ATCC BAA-968 / K-10</strain>
    </source>
</reference>
<keyword id="KW-0028">Amino-acid biosynthesis</keyword>
<keyword id="KW-0963">Cytoplasm</keyword>
<keyword id="KW-0368">Histidine biosynthesis</keyword>
<keyword id="KW-0456">Lyase</keyword>
<keyword id="KW-1185">Reference proteome</keyword>
<accession>P60666</accession>
<dbReference type="EC" id="4.3.2.10" evidence="1"/>
<dbReference type="EMBL" id="AE016958">
    <property type="protein sequence ID" value="AAS03616.1"/>
    <property type="molecule type" value="Genomic_DNA"/>
</dbReference>
<dbReference type="RefSeq" id="WP_003876211.1">
    <property type="nucleotide sequence ID" value="NZ_CP106873.1"/>
</dbReference>
<dbReference type="SMR" id="P60666"/>
<dbReference type="STRING" id="262316.MAP_1299"/>
<dbReference type="GeneID" id="75270584"/>
<dbReference type="KEGG" id="mpa:MAP_1299"/>
<dbReference type="eggNOG" id="COG0107">
    <property type="taxonomic scope" value="Bacteria"/>
</dbReference>
<dbReference type="HOGENOM" id="CLU_048577_4_0_11"/>
<dbReference type="UniPathway" id="UPA00031">
    <property type="reaction ID" value="UER00010"/>
</dbReference>
<dbReference type="Proteomes" id="UP000000580">
    <property type="component" value="Chromosome"/>
</dbReference>
<dbReference type="GO" id="GO:0005737">
    <property type="term" value="C:cytoplasm"/>
    <property type="evidence" value="ECO:0007669"/>
    <property type="project" value="UniProtKB-SubCell"/>
</dbReference>
<dbReference type="GO" id="GO:0000107">
    <property type="term" value="F:imidazoleglycerol-phosphate synthase activity"/>
    <property type="evidence" value="ECO:0007669"/>
    <property type="project" value="UniProtKB-UniRule"/>
</dbReference>
<dbReference type="GO" id="GO:0016829">
    <property type="term" value="F:lyase activity"/>
    <property type="evidence" value="ECO:0007669"/>
    <property type="project" value="UniProtKB-KW"/>
</dbReference>
<dbReference type="GO" id="GO:0000105">
    <property type="term" value="P:L-histidine biosynthetic process"/>
    <property type="evidence" value="ECO:0007669"/>
    <property type="project" value="UniProtKB-UniRule"/>
</dbReference>
<dbReference type="CDD" id="cd04731">
    <property type="entry name" value="HisF"/>
    <property type="match status" value="1"/>
</dbReference>
<dbReference type="FunFam" id="3.20.20.70:FF:000006">
    <property type="entry name" value="Imidazole glycerol phosphate synthase subunit HisF"/>
    <property type="match status" value="1"/>
</dbReference>
<dbReference type="Gene3D" id="3.20.20.70">
    <property type="entry name" value="Aldolase class I"/>
    <property type="match status" value="1"/>
</dbReference>
<dbReference type="HAMAP" id="MF_01013">
    <property type="entry name" value="HisF"/>
    <property type="match status" value="1"/>
</dbReference>
<dbReference type="InterPro" id="IPR013785">
    <property type="entry name" value="Aldolase_TIM"/>
</dbReference>
<dbReference type="InterPro" id="IPR006062">
    <property type="entry name" value="His_biosynth"/>
</dbReference>
<dbReference type="InterPro" id="IPR004651">
    <property type="entry name" value="HisF"/>
</dbReference>
<dbReference type="InterPro" id="IPR050064">
    <property type="entry name" value="IGPS_HisA/HisF"/>
</dbReference>
<dbReference type="InterPro" id="IPR011060">
    <property type="entry name" value="RibuloseP-bd_barrel"/>
</dbReference>
<dbReference type="NCBIfam" id="TIGR00735">
    <property type="entry name" value="hisF"/>
    <property type="match status" value="1"/>
</dbReference>
<dbReference type="PANTHER" id="PTHR21235:SF2">
    <property type="entry name" value="IMIDAZOLE GLYCEROL PHOSPHATE SYNTHASE HISHF"/>
    <property type="match status" value="1"/>
</dbReference>
<dbReference type="PANTHER" id="PTHR21235">
    <property type="entry name" value="IMIDAZOLE GLYCEROL PHOSPHATE SYNTHASE SUBUNIT HISF/H IGP SYNTHASE SUBUNIT HISF/H"/>
    <property type="match status" value="1"/>
</dbReference>
<dbReference type="Pfam" id="PF00977">
    <property type="entry name" value="His_biosynth"/>
    <property type="match status" value="1"/>
</dbReference>
<dbReference type="SUPFAM" id="SSF51366">
    <property type="entry name" value="Ribulose-phoshate binding barrel"/>
    <property type="match status" value="1"/>
</dbReference>
<proteinExistence type="inferred from homology"/>
<organism>
    <name type="scientific">Mycolicibacterium paratuberculosis (strain ATCC BAA-968 / K-10)</name>
    <name type="common">Mycobacterium paratuberculosis</name>
    <dbReference type="NCBI Taxonomy" id="262316"/>
    <lineage>
        <taxon>Bacteria</taxon>
        <taxon>Bacillati</taxon>
        <taxon>Actinomycetota</taxon>
        <taxon>Actinomycetes</taxon>
        <taxon>Mycobacteriales</taxon>
        <taxon>Mycobacteriaceae</taxon>
        <taxon>Mycobacterium</taxon>
        <taxon>Mycobacterium avium complex (MAC)</taxon>
    </lineage>
</organism>
<sequence length="265" mass="27362">MSPNSTGLAVRVIPCLDVDDGRVVKGVNFENLRDAGDPVELAAVYDAEGADELTFLDVTASSSGRATMLDVVRRTAEQVFIPLTVGGGVRTVADVDVLLRAGADKVSVNTAAIARPELLEEMARQFGSQCIVLSVDARTVPPGAVPTPSGWEVTTHGGRRGTGIDAVEWASRGADLGVGEILLNSMDADGTKAGFDLEMLQAVRSAVTVPVIASGGAGAAEHFAPAIEAGADAVLAASVFHFRELTIGQVKAAMAEAGIPVRMVR</sequence>
<gene>
    <name evidence="1" type="primary">hisF</name>
    <name type="ordered locus">MAP_1299</name>
</gene>
<feature type="chain" id="PRO_0000142184" description="Imidazole glycerol phosphate synthase subunit HisF">
    <location>
        <begin position="1"/>
        <end position="265"/>
    </location>
</feature>
<feature type="active site" evidence="1">
    <location>
        <position position="17"/>
    </location>
</feature>
<feature type="active site" evidence="1">
    <location>
        <position position="136"/>
    </location>
</feature>
<protein>
    <recommendedName>
        <fullName evidence="1">Imidazole glycerol phosphate synthase subunit HisF</fullName>
        <ecNumber evidence="1">4.3.2.10</ecNumber>
    </recommendedName>
    <alternativeName>
        <fullName evidence="1">IGP synthase cyclase subunit</fullName>
    </alternativeName>
    <alternativeName>
        <fullName evidence="1">IGP synthase subunit HisF</fullName>
    </alternativeName>
    <alternativeName>
        <fullName evidence="1">ImGP synthase subunit HisF</fullName>
        <shortName evidence="1">IGPS subunit HisF</shortName>
    </alternativeName>
</protein>